<accession>Q0HHJ6</accession>
<feature type="chain" id="PRO_0000296563" description="Large ribosomal subunit protein bL32">
    <location>
        <begin position="1"/>
        <end position="56"/>
    </location>
</feature>
<feature type="region of interest" description="Disordered" evidence="2">
    <location>
        <begin position="1"/>
        <end position="36"/>
    </location>
</feature>
<feature type="compositionally biased region" description="Basic residues" evidence="2">
    <location>
        <begin position="7"/>
        <end position="16"/>
    </location>
</feature>
<feature type="compositionally biased region" description="Polar residues" evidence="2">
    <location>
        <begin position="21"/>
        <end position="31"/>
    </location>
</feature>
<organism>
    <name type="scientific">Shewanella sp. (strain MR-4)</name>
    <dbReference type="NCBI Taxonomy" id="60480"/>
    <lineage>
        <taxon>Bacteria</taxon>
        <taxon>Pseudomonadati</taxon>
        <taxon>Pseudomonadota</taxon>
        <taxon>Gammaproteobacteria</taxon>
        <taxon>Alteromonadales</taxon>
        <taxon>Shewanellaceae</taxon>
        <taxon>Shewanella</taxon>
    </lineage>
</organism>
<evidence type="ECO:0000255" key="1">
    <source>
        <dbReference type="HAMAP-Rule" id="MF_00340"/>
    </source>
</evidence>
<evidence type="ECO:0000256" key="2">
    <source>
        <dbReference type="SAM" id="MobiDB-lite"/>
    </source>
</evidence>
<evidence type="ECO:0000305" key="3"/>
<name>RL32_SHESM</name>
<reference key="1">
    <citation type="submission" date="2006-08" db="EMBL/GenBank/DDBJ databases">
        <title>Complete sequence of Shewanella sp. MR-4.</title>
        <authorList>
            <consortium name="US DOE Joint Genome Institute"/>
            <person name="Copeland A."/>
            <person name="Lucas S."/>
            <person name="Lapidus A."/>
            <person name="Barry K."/>
            <person name="Detter J.C."/>
            <person name="Glavina del Rio T."/>
            <person name="Hammon N."/>
            <person name="Israni S."/>
            <person name="Dalin E."/>
            <person name="Tice H."/>
            <person name="Pitluck S."/>
            <person name="Kiss H."/>
            <person name="Brettin T."/>
            <person name="Bruce D."/>
            <person name="Han C."/>
            <person name="Tapia R."/>
            <person name="Gilna P."/>
            <person name="Schmutz J."/>
            <person name="Larimer F."/>
            <person name="Land M."/>
            <person name="Hauser L."/>
            <person name="Kyrpides N."/>
            <person name="Mikhailova N."/>
            <person name="Nealson K."/>
            <person name="Konstantinidis K."/>
            <person name="Klappenbach J."/>
            <person name="Tiedje J."/>
            <person name="Richardson P."/>
        </authorList>
    </citation>
    <scope>NUCLEOTIDE SEQUENCE [LARGE SCALE GENOMIC DNA]</scope>
    <source>
        <strain>MR-4</strain>
    </source>
</reference>
<sequence length="56" mass="6285">MAVQQNKKSRSKRGMRRSHDALSTAQLSVDATSGEVHMRHNVTADGFYRGKKVINK</sequence>
<dbReference type="EMBL" id="CP000446">
    <property type="protein sequence ID" value="ABI39471.1"/>
    <property type="molecule type" value="Genomic_DNA"/>
</dbReference>
<dbReference type="RefSeq" id="WP_011072715.1">
    <property type="nucleotide sequence ID" value="NC_008321.1"/>
</dbReference>
<dbReference type="SMR" id="Q0HHJ6"/>
<dbReference type="GeneID" id="94728508"/>
<dbReference type="KEGG" id="she:Shewmr4_2400"/>
<dbReference type="HOGENOM" id="CLU_129084_2_1_6"/>
<dbReference type="GO" id="GO:0015934">
    <property type="term" value="C:large ribosomal subunit"/>
    <property type="evidence" value="ECO:0007669"/>
    <property type="project" value="InterPro"/>
</dbReference>
<dbReference type="GO" id="GO:0003735">
    <property type="term" value="F:structural constituent of ribosome"/>
    <property type="evidence" value="ECO:0007669"/>
    <property type="project" value="InterPro"/>
</dbReference>
<dbReference type="GO" id="GO:0006412">
    <property type="term" value="P:translation"/>
    <property type="evidence" value="ECO:0007669"/>
    <property type="project" value="UniProtKB-UniRule"/>
</dbReference>
<dbReference type="HAMAP" id="MF_00340">
    <property type="entry name" value="Ribosomal_bL32"/>
    <property type="match status" value="1"/>
</dbReference>
<dbReference type="InterPro" id="IPR002677">
    <property type="entry name" value="Ribosomal_bL32"/>
</dbReference>
<dbReference type="InterPro" id="IPR044957">
    <property type="entry name" value="Ribosomal_bL32_bact"/>
</dbReference>
<dbReference type="InterPro" id="IPR011332">
    <property type="entry name" value="Ribosomal_zn-bd"/>
</dbReference>
<dbReference type="NCBIfam" id="TIGR01031">
    <property type="entry name" value="rpmF_bact"/>
    <property type="match status" value="1"/>
</dbReference>
<dbReference type="PANTHER" id="PTHR35534">
    <property type="entry name" value="50S RIBOSOMAL PROTEIN L32"/>
    <property type="match status" value="1"/>
</dbReference>
<dbReference type="PANTHER" id="PTHR35534:SF1">
    <property type="entry name" value="LARGE RIBOSOMAL SUBUNIT PROTEIN BL32"/>
    <property type="match status" value="1"/>
</dbReference>
<dbReference type="Pfam" id="PF01783">
    <property type="entry name" value="Ribosomal_L32p"/>
    <property type="match status" value="1"/>
</dbReference>
<dbReference type="SUPFAM" id="SSF57829">
    <property type="entry name" value="Zn-binding ribosomal proteins"/>
    <property type="match status" value="1"/>
</dbReference>
<comment type="similarity">
    <text evidence="1">Belongs to the bacterial ribosomal protein bL32 family.</text>
</comment>
<proteinExistence type="inferred from homology"/>
<protein>
    <recommendedName>
        <fullName evidence="1">Large ribosomal subunit protein bL32</fullName>
    </recommendedName>
    <alternativeName>
        <fullName evidence="3">50S ribosomal protein L32</fullName>
    </alternativeName>
</protein>
<gene>
    <name evidence="1" type="primary">rpmF</name>
    <name type="ordered locus">Shewmr4_2400</name>
</gene>
<keyword id="KW-0687">Ribonucleoprotein</keyword>
<keyword id="KW-0689">Ribosomal protein</keyword>